<organism>
    <name type="scientific">Acetivibrio thermocellus</name>
    <name type="common">Hungateiclostridium thermocellum</name>
    <name type="synonym">Clostridium thermocellum</name>
    <dbReference type="NCBI Taxonomy" id="1515"/>
    <lineage>
        <taxon>Bacteria</taxon>
        <taxon>Bacillati</taxon>
        <taxon>Bacillota</taxon>
        <taxon>Clostridia</taxon>
        <taxon>Eubacteriales</taxon>
        <taxon>Oscillospiraceae</taxon>
        <taxon>Acetivibrio</taxon>
    </lineage>
</organism>
<protein>
    <recommendedName>
        <fullName>Ferredoxin</fullName>
    </recommendedName>
</protein>
<comment type="function">
    <text>Ferredoxins are iron-sulfur proteins that transfer electrons in a wide variety of metabolic reactions.</text>
</comment>
<comment type="cofactor">
    <cofactor>
        <name>[4Fe-4S] cluster</name>
        <dbReference type="ChEBI" id="CHEBI:49883"/>
    </cofactor>
    <text>Binds 2 [4Fe-4S] clusters.</text>
</comment>
<accession>P07508</accession>
<name>FER_ACETH</name>
<keyword id="KW-0004">4Fe-4S</keyword>
<keyword id="KW-0903">Direct protein sequencing</keyword>
<keyword id="KW-0249">Electron transport</keyword>
<keyword id="KW-0408">Iron</keyword>
<keyword id="KW-0411">Iron-sulfur</keyword>
<keyword id="KW-0479">Metal-binding</keyword>
<keyword id="KW-0677">Repeat</keyword>
<keyword id="KW-0813">Transport</keyword>
<dbReference type="PIR" id="A24932">
    <property type="entry name" value="A24932"/>
</dbReference>
<dbReference type="SMR" id="P07508"/>
<dbReference type="GO" id="GO:0005737">
    <property type="term" value="C:cytoplasm"/>
    <property type="evidence" value="ECO:0007669"/>
    <property type="project" value="TreeGrafter"/>
</dbReference>
<dbReference type="GO" id="GO:0051539">
    <property type="term" value="F:4 iron, 4 sulfur cluster binding"/>
    <property type="evidence" value="ECO:0007669"/>
    <property type="project" value="UniProtKB-KW"/>
</dbReference>
<dbReference type="GO" id="GO:0046872">
    <property type="term" value="F:metal ion binding"/>
    <property type="evidence" value="ECO:0007669"/>
    <property type="project" value="UniProtKB-KW"/>
</dbReference>
<dbReference type="FunFam" id="3.30.70.20:FF:000045">
    <property type="entry name" value="Ferredoxin, 4Fe-4S"/>
    <property type="match status" value="1"/>
</dbReference>
<dbReference type="Gene3D" id="3.30.70.20">
    <property type="match status" value="1"/>
</dbReference>
<dbReference type="InterPro" id="IPR017896">
    <property type="entry name" value="4Fe4S_Fe-S-bd"/>
</dbReference>
<dbReference type="InterPro" id="IPR017900">
    <property type="entry name" value="4Fe4S_Fe_S_CS"/>
</dbReference>
<dbReference type="InterPro" id="IPR050157">
    <property type="entry name" value="PSI_iron-sulfur_center"/>
</dbReference>
<dbReference type="PANTHER" id="PTHR24960:SF79">
    <property type="entry name" value="PHOTOSYSTEM I IRON-SULFUR CENTER"/>
    <property type="match status" value="1"/>
</dbReference>
<dbReference type="PANTHER" id="PTHR24960">
    <property type="entry name" value="PHOTOSYSTEM I IRON-SULFUR CENTER-RELATED"/>
    <property type="match status" value="1"/>
</dbReference>
<dbReference type="Pfam" id="PF12838">
    <property type="entry name" value="Fer4_7"/>
    <property type="match status" value="1"/>
</dbReference>
<dbReference type="SUPFAM" id="SSF54862">
    <property type="entry name" value="4Fe-4S ferredoxins"/>
    <property type="match status" value="1"/>
</dbReference>
<dbReference type="PROSITE" id="PS00198">
    <property type="entry name" value="4FE4S_FER_1"/>
    <property type="match status" value="2"/>
</dbReference>
<dbReference type="PROSITE" id="PS51379">
    <property type="entry name" value="4FE4S_FER_2"/>
    <property type="match status" value="2"/>
</dbReference>
<proteinExistence type="evidence at protein level"/>
<sequence length="55" mass="5601">AYFITDACISCGACESECPVSPISPGDSVYVIDADACIECGACANVCPVDAPQQK</sequence>
<evidence type="ECO:0000250" key="1"/>
<evidence type="ECO:0000255" key="2">
    <source>
        <dbReference type="PROSITE-ProRule" id="PRU00711"/>
    </source>
</evidence>
<feature type="chain" id="PRO_0000159115" description="Ferredoxin">
    <location>
        <begin position="1"/>
        <end position="55"/>
    </location>
</feature>
<feature type="domain" description="4Fe-4S ferredoxin-type 1" evidence="2">
    <location>
        <begin position="2"/>
        <end position="27"/>
    </location>
</feature>
<feature type="domain" description="4Fe-4S ferredoxin-type 2" evidence="2">
    <location>
        <begin position="28"/>
        <end position="55"/>
    </location>
</feature>
<feature type="binding site" evidence="1">
    <location>
        <position position="8"/>
    </location>
    <ligand>
        <name>[4Fe-4S] cluster</name>
        <dbReference type="ChEBI" id="CHEBI:49883"/>
        <label>1</label>
    </ligand>
</feature>
<feature type="binding site" evidence="1">
    <location>
        <position position="11"/>
    </location>
    <ligand>
        <name>[4Fe-4S] cluster</name>
        <dbReference type="ChEBI" id="CHEBI:49883"/>
        <label>1</label>
    </ligand>
</feature>
<feature type="binding site" evidence="1">
    <location>
        <position position="14"/>
    </location>
    <ligand>
        <name>[4Fe-4S] cluster</name>
        <dbReference type="ChEBI" id="CHEBI:49883"/>
        <label>1</label>
    </ligand>
</feature>
<feature type="binding site" evidence="1">
    <location>
        <position position="18"/>
    </location>
    <ligand>
        <name>[4Fe-4S] cluster</name>
        <dbReference type="ChEBI" id="CHEBI:49883"/>
        <label>2</label>
    </ligand>
</feature>
<feature type="binding site" evidence="1">
    <location>
        <position position="37"/>
    </location>
    <ligand>
        <name>[4Fe-4S] cluster</name>
        <dbReference type="ChEBI" id="CHEBI:49883"/>
        <label>2</label>
    </ligand>
</feature>
<feature type="binding site" evidence="1">
    <location>
        <position position="40"/>
    </location>
    <ligand>
        <name>[4Fe-4S] cluster</name>
        <dbReference type="ChEBI" id="CHEBI:49883"/>
        <label>2</label>
    </ligand>
</feature>
<feature type="binding site" evidence="1">
    <location>
        <position position="43"/>
    </location>
    <ligand>
        <name>[4Fe-4S] cluster</name>
        <dbReference type="ChEBI" id="CHEBI:49883"/>
        <label>2</label>
    </ligand>
</feature>
<feature type="binding site" evidence="1">
    <location>
        <position position="47"/>
    </location>
    <ligand>
        <name>[4Fe-4S] cluster</name>
        <dbReference type="ChEBI" id="CHEBI:49883"/>
        <label>1</label>
    </ligand>
</feature>
<reference key="1">
    <citation type="journal article" date="1986" name="Biochim. Biophys. Acta">
        <title>Sequence determination and three-dimensional modelling of Clostridium thermocellum ferredoxin: structural considerations for its high thermal stability.</title>
        <authorList>
            <person name="Bruschi M."/>
            <person name="Cambillau C."/>
            <person name="Bovier-Lapierre G.E."/>
            <person name="Bonicel J.J."/>
            <person name="Forget P."/>
        </authorList>
    </citation>
    <scope>PROTEIN SEQUENCE</scope>
</reference>